<dbReference type="EMBL" id="L39358">
    <property type="protein sequence ID" value="AAA91102.1"/>
    <property type="molecule type" value="mRNA"/>
</dbReference>
<dbReference type="SMR" id="P47751"/>
<dbReference type="GlyCosmos" id="P47751">
    <property type="glycosylation" value="2 sites, No reported glycans"/>
</dbReference>
<dbReference type="GO" id="GO:0005886">
    <property type="term" value="C:plasma membrane"/>
    <property type="evidence" value="ECO:0007669"/>
    <property type="project" value="UniProtKB-SubCell"/>
</dbReference>
<dbReference type="GO" id="GO:0008188">
    <property type="term" value="F:neuropeptide receptor activity"/>
    <property type="evidence" value="ECO:0007669"/>
    <property type="project" value="TreeGrafter"/>
</dbReference>
<dbReference type="CDD" id="cd15123">
    <property type="entry name" value="7tmA_BRS-3"/>
    <property type="match status" value="1"/>
</dbReference>
<dbReference type="FunFam" id="1.20.1070.10:FF:000166">
    <property type="entry name" value="Bombesin receptor subtype-3"/>
    <property type="match status" value="1"/>
</dbReference>
<dbReference type="Gene3D" id="1.20.1070.10">
    <property type="entry name" value="Rhodopsin 7-helix transmembrane proteins"/>
    <property type="match status" value="1"/>
</dbReference>
<dbReference type="InterPro" id="IPR001556">
    <property type="entry name" value="Bombsn_rcpt-like"/>
</dbReference>
<dbReference type="InterPro" id="IPR000401">
    <property type="entry name" value="BRS4"/>
</dbReference>
<dbReference type="InterPro" id="IPR000276">
    <property type="entry name" value="GPCR_Rhodpsn"/>
</dbReference>
<dbReference type="InterPro" id="IPR017452">
    <property type="entry name" value="GPCR_Rhodpsn_7TM"/>
</dbReference>
<dbReference type="PANTHER" id="PTHR45695:SF6">
    <property type="entry name" value="BOMBESIN RECEPTOR SUBTYPE-3"/>
    <property type="match status" value="1"/>
</dbReference>
<dbReference type="PANTHER" id="PTHR45695">
    <property type="entry name" value="LEUCOKININ RECEPTOR-RELATED"/>
    <property type="match status" value="1"/>
</dbReference>
<dbReference type="Pfam" id="PF00001">
    <property type="entry name" value="7tm_1"/>
    <property type="match status" value="1"/>
</dbReference>
<dbReference type="PRINTS" id="PR00638">
    <property type="entry name" value="BOMBESIN4R"/>
</dbReference>
<dbReference type="PRINTS" id="PR00358">
    <property type="entry name" value="BOMBESINR"/>
</dbReference>
<dbReference type="PRINTS" id="PR00237">
    <property type="entry name" value="GPCRRHODOPSN"/>
</dbReference>
<dbReference type="SMART" id="SM01381">
    <property type="entry name" value="7TM_GPCR_Srsx"/>
    <property type="match status" value="1"/>
</dbReference>
<dbReference type="SUPFAM" id="SSF81321">
    <property type="entry name" value="Family A G protein-coupled receptor-like"/>
    <property type="match status" value="1"/>
</dbReference>
<dbReference type="PROSITE" id="PS00237">
    <property type="entry name" value="G_PROTEIN_RECEP_F1_1"/>
    <property type="match status" value="1"/>
</dbReference>
<dbReference type="PROSITE" id="PS50262">
    <property type="entry name" value="G_PROTEIN_RECEP_F1_2"/>
    <property type="match status" value="1"/>
</dbReference>
<sequence length="392" mass="43462">MPEGFQSLNQTLPSAISSIAHLESLNDSFILGAKQSEDVSPGLEILALISVTYAVIISVGILGNTILIKVFFKIKSMQTVPNIFITSLAFGDLLLLLTCVPVDASRYIVDTWMFGRAGCKIISFIQLTSVGVSVFTLTVLSADRYRAIVKPLQLQTSDAVLKTCGKAVCVWIISMLLAAPEAVFSDLYEFGSSEKNTTFEACAPYPVSEKILQETHSLICFLVFYIVPLSIISAYYFLIAKTLYKSTFNMPAEEHTHARKQIESRKRVAKTVLVLVALFAVCWLPNHMLYLYRSFTYHSAVNSSAFHLSATIFARVLAFSNSCVNPFALYWLSRSFRQHFKKQVYCCKTEPPASQQSPTHSSTITGITAVKGNIQMSEISITLLSAYDVKKE</sequence>
<comment type="function">
    <text>The relative rank potency of bombesin-like peptides for this receptor is [Phe13]bombesin &gt; [Leu13]bombesin &gt; GRP &gt; neuromedin-B.</text>
</comment>
<comment type="subcellular location">
    <subcellularLocation>
        <location>Cell membrane</location>
        <topology>Multi-pass membrane protein</topology>
    </subcellularLocation>
</comment>
<comment type="tissue specificity">
    <text>Expressed only in brain, primarily in cortex and forebrain and at low levels in the midbrain.</text>
</comment>
<comment type="similarity">
    <text evidence="3">Belongs to the G-protein coupled receptor 1 family.</text>
</comment>
<evidence type="ECO:0000250" key="1"/>
<evidence type="ECO:0000255" key="2"/>
<evidence type="ECO:0000255" key="3">
    <source>
        <dbReference type="PROSITE-ProRule" id="PRU00521"/>
    </source>
</evidence>
<feature type="chain" id="PRO_0000069200" description="[Phe13]-bombesin receptor">
    <location>
        <begin position="1"/>
        <end position="392"/>
    </location>
</feature>
<feature type="topological domain" description="Extracellular" evidence="2">
    <location>
        <begin position="1"/>
        <end position="40"/>
    </location>
</feature>
<feature type="transmembrane region" description="Helical; Name=1" evidence="2">
    <location>
        <begin position="41"/>
        <end position="62"/>
    </location>
</feature>
<feature type="topological domain" description="Cytoplasmic" evidence="2">
    <location>
        <begin position="63"/>
        <end position="81"/>
    </location>
</feature>
<feature type="transmembrane region" description="Helical; Name=2" evidence="2">
    <location>
        <begin position="82"/>
        <end position="102"/>
    </location>
</feature>
<feature type="topological domain" description="Extracellular" evidence="2">
    <location>
        <begin position="103"/>
        <end position="120"/>
    </location>
</feature>
<feature type="transmembrane region" description="Helical; Name=3" evidence="2">
    <location>
        <begin position="121"/>
        <end position="142"/>
    </location>
</feature>
<feature type="topological domain" description="Cytoplasmic" evidence="2">
    <location>
        <begin position="143"/>
        <end position="162"/>
    </location>
</feature>
<feature type="transmembrane region" description="Helical; Name=4" evidence="2">
    <location>
        <begin position="163"/>
        <end position="183"/>
    </location>
</feature>
<feature type="topological domain" description="Extracellular" evidence="2">
    <location>
        <begin position="184"/>
        <end position="219"/>
    </location>
</feature>
<feature type="transmembrane region" description="Helical; Name=5" evidence="2">
    <location>
        <begin position="220"/>
        <end position="240"/>
    </location>
</feature>
<feature type="topological domain" description="Cytoplasmic" evidence="2">
    <location>
        <begin position="241"/>
        <end position="271"/>
    </location>
</feature>
<feature type="transmembrane region" description="Helical; Name=6" evidence="2">
    <location>
        <begin position="272"/>
        <end position="292"/>
    </location>
</feature>
<feature type="topological domain" description="Extracellular" evidence="2">
    <location>
        <begin position="293"/>
        <end position="312"/>
    </location>
</feature>
<feature type="transmembrane region" description="Helical; Name=7" evidence="2">
    <location>
        <begin position="313"/>
        <end position="332"/>
    </location>
</feature>
<feature type="topological domain" description="Cytoplasmic" evidence="2">
    <location>
        <begin position="333"/>
        <end position="392"/>
    </location>
</feature>
<feature type="lipid moiety-binding region" description="S-palmitoyl cysteine" evidence="1">
    <location>
        <position position="346"/>
    </location>
</feature>
<feature type="glycosylation site" description="N-linked (GlcNAc...) asparagine" evidence="2">
    <location>
        <position position="9"/>
    </location>
</feature>
<feature type="glycosylation site" description="N-linked (GlcNAc...) asparagine" evidence="2">
    <location>
        <position position="26"/>
    </location>
</feature>
<feature type="disulfide bond" evidence="3">
    <location>
        <begin position="119"/>
        <end position="202"/>
    </location>
</feature>
<accession>P47751</accession>
<protein>
    <recommendedName>
        <fullName>[Phe13]-bombesin receptor</fullName>
    </recommendedName>
    <alternativeName>
        <fullName>Bombesin receptor subtype-4</fullName>
        <shortName>BRS-4</shortName>
    </alternativeName>
</protein>
<gene>
    <name type="primary">BB4</name>
</gene>
<proteinExistence type="evidence at transcript level"/>
<organism>
    <name type="scientific">Bombina orientalis</name>
    <name type="common">Oriental fire-bellied toad</name>
    <dbReference type="NCBI Taxonomy" id="8346"/>
    <lineage>
        <taxon>Eukaryota</taxon>
        <taxon>Metazoa</taxon>
        <taxon>Chordata</taxon>
        <taxon>Craniata</taxon>
        <taxon>Vertebrata</taxon>
        <taxon>Euteleostomi</taxon>
        <taxon>Amphibia</taxon>
        <taxon>Batrachia</taxon>
        <taxon>Anura</taxon>
        <taxon>Bombinatoridae</taxon>
        <taxon>Bombina</taxon>
    </lineage>
</organism>
<reference key="1">
    <citation type="journal article" date="1995" name="Proc. Natl. Acad. Sci. U.S.A.">
        <title>Cloning of a receptor for amphibian [Phe13]bombesin distinct from the receptor for gastrin-releasing peptide: identification of a fourth bombesin receptor subtype (BB4).</title>
        <authorList>
            <person name="Nagalla S.R."/>
            <person name="Barry B.J."/>
            <person name="Creswick K.C."/>
            <person name="Eden P."/>
            <person name="Taylor J.T."/>
            <person name="Spindel E.R."/>
        </authorList>
    </citation>
    <scope>NUCLEOTIDE SEQUENCE [MRNA]</scope>
    <source>
        <tissue>Brain</tissue>
    </source>
</reference>
<reference key="2">
    <citation type="submission" date="1996-02" db="EMBL/GenBank/DDBJ databases">
        <authorList>
            <person name="Spindel E.R."/>
        </authorList>
    </citation>
    <scope>SEQUENCE REVISION TO C-TERMINUS</scope>
</reference>
<keyword id="KW-1003">Cell membrane</keyword>
<keyword id="KW-1015">Disulfide bond</keyword>
<keyword id="KW-0297">G-protein coupled receptor</keyword>
<keyword id="KW-0325">Glycoprotein</keyword>
<keyword id="KW-0449">Lipoprotein</keyword>
<keyword id="KW-0472">Membrane</keyword>
<keyword id="KW-0564">Palmitate</keyword>
<keyword id="KW-0675">Receptor</keyword>
<keyword id="KW-0807">Transducer</keyword>
<keyword id="KW-0812">Transmembrane</keyword>
<keyword id="KW-1133">Transmembrane helix</keyword>
<name>BRS4_BOMOR</name>